<gene>
    <name type="ordered locus">AF_1786</name>
</gene>
<protein>
    <recommendedName>
        <fullName>Uncharacterized protein AF_1786</fullName>
    </recommendedName>
</protein>
<sequence length="177" mass="19830">MRSEVVNMLEYLYPLRTYLIVSGVEKPNVMTADWVVPLSFSPQLLGVAIGHSRYTHSLIKECGEFVVAVPTIELLKDVWKAGTLSGAKENKMEKLSLTLVESKKVKVPSIKECQANLECRVVKEVETGDHTLFVGEILHVTHGDAFKDGKPDINYKFVMHASFGKNFTTNSSERFEP</sequence>
<feature type="chain" id="PRO_0000085527" description="Uncharacterized protein AF_1786">
    <location>
        <begin position="1"/>
        <end position="177"/>
    </location>
</feature>
<dbReference type="EMBL" id="AE000782">
    <property type="protein sequence ID" value="AAB89461.1"/>
    <property type="molecule type" value="Genomic_DNA"/>
</dbReference>
<dbReference type="PIR" id="A69473">
    <property type="entry name" value="A69473"/>
</dbReference>
<dbReference type="SMR" id="O28488"/>
<dbReference type="STRING" id="224325.AF_1786"/>
<dbReference type="PaxDb" id="224325-AF_1786"/>
<dbReference type="EnsemblBacteria" id="AAB89461">
    <property type="protein sequence ID" value="AAB89461"/>
    <property type="gene ID" value="AF_1786"/>
</dbReference>
<dbReference type="KEGG" id="afu:AF_1786"/>
<dbReference type="eggNOG" id="arCOG02017">
    <property type="taxonomic scope" value="Archaea"/>
</dbReference>
<dbReference type="HOGENOM" id="CLU_059021_5_3_2"/>
<dbReference type="PhylomeDB" id="O28488"/>
<dbReference type="Proteomes" id="UP000002199">
    <property type="component" value="Chromosome"/>
</dbReference>
<dbReference type="GO" id="GO:0010181">
    <property type="term" value="F:FMN binding"/>
    <property type="evidence" value="ECO:0007669"/>
    <property type="project" value="InterPro"/>
</dbReference>
<dbReference type="Gene3D" id="2.30.110.10">
    <property type="entry name" value="Electron Transport, Fmn-binding Protein, Chain A"/>
    <property type="match status" value="1"/>
</dbReference>
<dbReference type="InterPro" id="IPR002563">
    <property type="entry name" value="Flavin_Rdtase-like_dom"/>
</dbReference>
<dbReference type="InterPro" id="IPR052174">
    <property type="entry name" value="Flavoredoxin"/>
</dbReference>
<dbReference type="InterPro" id="IPR012349">
    <property type="entry name" value="Split_barrel_FMN-bd"/>
</dbReference>
<dbReference type="PANTHER" id="PTHR43567:SF1">
    <property type="entry name" value="FLAVOREDOXIN"/>
    <property type="match status" value="1"/>
</dbReference>
<dbReference type="PANTHER" id="PTHR43567">
    <property type="entry name" value="FLAVOREDOXIN-RELATED-RELATED"/>
    <property type="match status" value="1"/>
</dbReference>
<dbReference type="Pfam" id="PF01613">
    <property type="entry name" value="Flavin_Reduct"/>
    <property type="match status" value="1"/>
</dbReference>
<dbReference type="SMART" id="SM00903">
    <property type="entry name" value="Flavin_Reduct"/>
    <property type="match status" value="1"/>
</dbReference>
<dbReference type="SUPFAM" id="SSF50475">
    <property type="entry name" value="FMN-binding split barrel"/>
    <property type="match status" value="1"/>
</dbReference>
<accession>O28488</accession>
<reference key="1">
    <citation type="journal article" date="1997" name="Nature">
        <title>The complete genome sequence of the hyperthermophilic, sulphate-reducing archaeon Archaeoglobus fulgidus.</title>
        <authorList>
            <person name="Klenk H.-P."/>
            <person name="Clayton R.A."/>
            <person name="Tomb J.-F."/>
            <person name="White O."/>
            <person name="Nelson K.E."/>
            <person name="Ketchum K.A."/>
            <person name="Dodson R.J."/>
            <person name="Gwinn M.L."/>
            <person name="Hickey E.K."/>
            <person name="Peterson J.D."/>
            <person name="Richardson D.L."/>
            <person name="Kerlavage A.R."/>
            <person name="Graham D.E."/>
            <person name="Kyrpides N.C."/>
            <person name="Fleischmann R.D."/>
            <person name="Quackenbush J."/>
            <person name="Lee N.H."/>
            <person name="Sutton G.G."/>
            <person name="Gill S.R."/>
            <person name="Kirkness E.F."/>
            <person name="Dougherty B.A."/>
            <person name="McKenney K."/>
            <person name="Adams M.D."/>
            <person name="Loftus B.J."/>
            <person name="Peterson S.N."/>
            <person name="Reich C.I."/>
            <person name="McNeil L.K."/>
            <person name="Badger J.H."/>
            <person name="Glodek A."/>
            <person name="Zhou L."/>
            <person name="Overbeek R."/>
            <person name="Gocayne J.D."/>
            <person name="Weidman J.F."/>
            <person name="McDonald L.A."/>
            <person name="Utterback T.R."/>
            <person name="Cotton M.D."/>
            <person name="Spriggs T."/>
            <person name="Artiach P."/>
            <person name="Kaine B.P."/>
            <person name="Sykes S.M."/>
            <person name="Sadow P.W."/>
            <person name="D'Andrea K.P."/>
            <person name="Bowman C."/>
            <person name="Fujii C."/>
            <person name="Garland S.A."/>
            <person name="Mason T.M."/>
            <person name="Olsen G.J."/>
            <person name="Fraser C.M."/>
            <person name="Smith H.O."/>
            <person name="Woese C.R."/>
            <person name="Venter J.C."/>
        </authorList>
    </citation>
    <scope>NUCLEOTIDE SEQUENCE [LARGE SCALE GENOMIC DNA]</scope>
    <source>
        <strain>ATCC 49558 / DSM 4304 / JCM 9628 / NBRC 100126 / VC-16</strain>
    </source>
</reference>
<name>Y1786_ARCFU</name>
<keyword id="KW-0285">Flavoprotein</keyword>
<keyword id="KW-0288">FMN</keyword>
<keyword id="KW-1185">Reference proteome</keyword>
<evidence type="ECO:0000250" key="1"/>
<evidence type="ECO:0000305" key="2"/>
<comment type="cofactor">
    <cofactor evidence="1">
        <name>FMN</name>
        <dbReference type="ChEBI" id="CHEBI:58210"/>
    </cofactor>
</comment>
<comment type="similarity">
    <text evidence="2">Belongs to the flavoredoxin family.</text>
</comment>
<proteinExistence type="inferred from homology"/>
<organism>
    <name type="scientific">Archaeoglobus fulgidus (strain ATCC 49558 / DSM 4304 / JCM 9628 / NBRC 100126 / VC-16)</name>
    <dbReference type="NCBI Taxonomy" id="224325"/>
    <lineage>
        <taxon>Archaea</taxon>
        <taxon>Methanobacteriati</taxon>
        <taxon>Methanobacteriota</taxon>
        <taxon>Archaeoglobi</taxon>
        <taxon>Archaeoglobales</taxon>
        <taxon>Archaeoglobaceae</taxon>
        <taxon>Archaeoglobus</taxon>
    </lineage>
</organism>